<feature type="chain" id="PRO_0000095114" description="Leucyl-cystinyl aminopeptidase">
    <location>
        <begin position="1"/>
        <end position="1025"/>
    </location>
</feature>
<feature type="chain" id="PRO_0000292264" description="Leucyl-cystinyl aminopeptidase, pregnancy serum form">
    <location>
        <begin position="155"/>
        <end position="1025"/>
    </location>
</feature>
<feature type="topological domain" description="Cytoplasmic" evidence="3">
    <location>
        <begin position="1"/>
        <end position="110"/>
    </location>
</feature>
<feature type="transmembrane region" description="Helical; Signal-anchor for type II membrane protein" evidence="3">
    <location>
        <begin position="111"/>
        <end position="131"/>
    </location>
</feature>
<feature type="topological domain" description="Extracellular" evidence="3">
    <location>
        <begin position="132"/>
        <end position="1025"/>
    </location>
</feature>
<feature type="region of interest" description="Tankyrase binding">
    <location>
        <begin position="96"/>
        <end position="101"/>
    </location>
</feature>
<feature type="short sequence motif" description="Dileucine internalization motif" evidence="3">
    <location>
        <begin position="53"/>
        <end position="54"/>
    </location>
</feature>
<feature type="short sequence motif" description="Dileucine internalization motif" evidence="3">
    <location>
        <begin position="76"/>
        <end position="77"/>
    </location>
</feature>
<feature type="active site" description="Proton acceptor" evidence="4">
    <location>
        <position position="465"/>
    </location>
</feature>
<feature type="binding site" evidence="1">
    <location>
        <position position="295"/>
    </location>
    <ligand>
        <name>substrate</name>
    </ligand>
</feature>
<feature type="binding site" evidence="1">
    <location>
        <begin position="428"/>
        <end position="432"/>
    </location>
    <ligand>
        <name>substrate</name>
    </ligand>
</feature>
<feature type="binding site" evidence="4">
    <location>
        <position position="464"/>
    </location>
    <ligand>
        <name>Zn(2+)</name>
        <dbReference type="ChEBI" id="CHEBI:29105"/>
        <note>catalytic</note>
    </ligand>
</feature>
<feature type="binding site" evidence="4">
    <location>
        <position position="468"/>
    </location>
    <ligand>
        <name>Zn(2+)</name>
        <dbReference type="ChEBI" id="CHEBI:29105"/>
        <note>catalytic</note>
    </ligand>
</feature>
<feature type="binding site" evidence="4">
    <location>
        <position position="487"/>
    </location>
    <ligand>
        <name>Zn(2+)</name>
        <dbReference type="ChEBI" id="CHEBI:29105"/>
        <note>catalytic</note>
    </ligand>
</feature>
<feature type="site" description="Cleavage; to produce pregnancy serum form">
    <location>
        <begin position="154"/>
        <end position="155"/>
    </location>
</feature>
<feature type="site" description="Transition state stabilizer" evidence="1">
    <location>
        <position position="549"/>
    </location>
</feature>
<feature type="modified residue" description="N-acetylmethionine" evidence="14">
    <location>
        <position position="1"/>
    </location>
</feature>
<feature type="modified residue" description="Phosphotyrosine" evidence="2">
    <location>
        <position position="70"/>
    </location>
</feature>
<feature type="modified residue" description="Phosphoserine" evidence="15">
    <location>
        <position position="80"/>
    </location>
</feature>
<feature type="modified residue" description="Phosphoserine" evidence="15 16">
    <location>
        <position position="91"/>
    </location>
</feature>
<feature type="glycosylation site" description="N-linked (GlcNAc...) asparagine" evidence="3">
    <location>
        <position position="145"/>
    </location>
</feature>
<feature type="glycosylation site" description="N-linked (GlcNAc...) asparagine" evidence="8">
    <location>
        <position position="184"/>
    </location>
</feature>
<feature type="glycosylation site" description="N-linked (GlcNAc...) asparagine" evidence="3">
    <location>
        <position position="215"/>
    </location>
</feature>
<feature type="glycosylation site" description="N-linked (GlcNAc...) asparagine" evidence="3">
    <location>
        <position position="256"/>
    </location>
</feature>
<feature type="glycosylation site" description="N-linked (GlcNAc...) asparagine" evidence="3">
    <location>
        <position position="266"/>
    </location>
</feature>
<feature type="glycosylation site" description="N-linked (GlcNAc...) asparagine" evidence="3">
    <location>
        <position position="368"/>
    </location>
</feature>
<feature type="glycosylation site" description="N-linked (GlcNAc...) asparagine" evidence="3">
    <location>
        <position position="374"/>
    </location>
</feature>
<feature type="glycosylation site" description="N-linked (GlcNAc...) asparagine" evidence="8">
    <location>
        <position position="448"/>
    </location>
</feature>
<feature type="glycosylation site" description="N-linked (GlcNAc...) asparagine" evidence="3">
    <location>
        <position position="525"/>
    </location>
</feature>
<feature type="glycosylation site" description="N-linked (GlcNAc...) asparagine" evidence="3">
    <location>
        <position position="578"/>
    </location>
</feature>
<feature type="glycosylation site" description="N-linked (GlcNAc...) asparagine" evidence="3">
    <location>
        <position position="598"/>
    </location>
</feature>
<feature type="glycosylation site" description="N-linked (GlcNAc...) asparagine" evidence="3">
    <location>
        <position position="664"/>
    </location>
</feature>
<feature type="glycosylation site" description="N-linked (GlcNAc...) asparagine" evidence="8">
    <location>
        <position position="682"/>
    </location>
</feature>
<feature type="glycosylation site" description="N-linked (GlcNAc...) asparagine" evidence="3">
    <location>
        <position position="760"/>
    </location>
</feature>
<feature type="glycosylation site" description="N-linked (GlcNAc...) asparagine" evidence="3">
    <location>
        <position position="834"/>
    </location>
</feature>
<feature type="glycosylation site" description="N-linked (GlcNAc...) asparagine" evidence="8">
    <location>
        <position position="850"/>
    </location>
</feature>
<feature type="glycosylation site" description="N-linked (GlcNAc...) asparagine" evidence="3">
    <location>
        <position position="989"/>
    </location>
</feature>
<feature type="splice variant" id="VSP_005449" description="In isoform 3." evidence="11">
    <location>
        <begin position="1"/>
        <end position="19"/>
    </location>
</feature>
<feature type="splice variant" id="VSP_005448" description="In isoform 2." evidence="11 12">
    <location>
        <begin position="1"/>
        <end position="14"/>
    </location>
</feature>
<feature type="sequence variant" id="VAR_031616" description="In dbSNP:rs3797799.">
    <original>S</original>
    <variation>P</variation>
    <location>
        <position position="86"/>
    </location>
</feature>
<feature type="sequence variant" id="VAR_051567" description="In dbSNP:rs12520455.">
    <original>N</original>
    <variation>I</variation>
    <location>
        <position position="594"/>
    </location>
</feature>
<feature type="sequence variant" id="VAR_012812" description="In dbSNP:rs2303138.">
    <original>A</original>
    <variation>T</variation>
    <location>
        <position position="763"/>
    </location>
</feature>
<feature type="sequence variant" id="VAR_051568" description="In dbSNP:rs17087233.">
    <original>S</original>
    <variation>T</variation>
    <location>
        <position position="913"/>
    </location>
</feature>
<feature type="sequence variant" id="VAR_031617" description="In dbSNP:rs11746232.">
    <original>I</original>
    <variation>V</variation>
    <location>
        <position position="963"/>
    </location>
</feature>
<feature type="sequence conflict" description="In Ref. 3; CAB61646/CAB94753." evidence="13" ref="3">
    <original>D</original>
    <variation>V</variation>
    <location>
        <position position="66"/>
    </location>
</feature>
<feature type="sequence conflict" description="In Ref. 6; AA sequence." evidence="13" ref="6">
    <original>S</original>
    <variation>L</variation>
    <location>
        <position position="301"/>
    </location>
</feature>
<feature type="sequence conflict" description="In Ref. 2; AAB66672/AAB66673 and 3; CAB61646/CAB94753." evidence="13" ref="2 3">
    <original>K</original>
    <variation>N</variation>
    <location>
        <position position="386"/>
    </location>
</feature>
<feature type="sequence conflict" description="In Ref. 1; BAA09436." evidence="13" ref="1">
    <original>K</original>
    <variation>Q</variation>
    <location>
        <position position="892"/>
    </location>
</feature>
<feature type="sequence conflict" description="In Ref. 1; BAA09436." evidence="13" ref="1">
    <original>F</original>
    <variation>L</variation>
    <location>
        <position position="944"/>
    </location>
</feature>
<feature type="strand" evidence="21">
    <location>
        <begin position="165"/>
        <end position="167"/>
    </location>
</feature>
<feature type="strand" evidence="21">
    <location>
        <begin position="170"/>
        <end position="184"/>
    </location>
</feature>
<feature type="turn" evidence="21">
    <location>
        <begin position="185"/>
        <end position="188"/>
    </location>
</feature>
<feature type="strand" evidence="21">
    <location>
        <begin position="189"/>
        <end position="202"/>
    </location>
</feature>
<feature type="strand" evidence="21">
    <location>
        <begin position="204"/>
        <end position="210"/>
    </location>
</feature>
<feature type="strand" evidence="21">
    <location>
        <begin position="215"/>
        <end position="223"/>
    </location>
</feature>
<feature type="turn" evidence="21">
    <location>
        <begin position="224"/>
        <end position="226"/>
    </location>
</feature>
<feature type="strand" evidence="24">
    <location>
        <begin position="229"/>
        <end position="231"/>
    </location>
</feature>
<feature type="strand" evidence="21">
    <location>
        <begin position="233"/>
        <end position="237"/>
    </location>
</feature>
<feature type="helix" evidence="21">
    <location>
        <begin position="238"/>
        <end position="240"/>
    </location>
</feature>
<feature type="strand" evidence="21">
    <location>
        <begin position="242"/>
        <end position="251"/>
    </location>
</feature>
<feature type="strand" evidence="21">
    <location>
        <begin position="256"/>
        <end position="266"/>
    </location>
</feature>
<feature type="strand" evidence="21">
    <location>
        <begin position="268"/>
        <end position="280"/>
    </location>
</feature>
<feature type="strand" evidence="23">
    <location>
        <begin position="282"/>
        <end position="284"/>
    </location>
</feature>
<feature type="strand" evidence="21">
    <location>
        <begin position="286"/>
        <end position="293"/>
    </location>
</feature>
<feature type="turn" evidence="21">
    <location>
        <begin position="295"/>
        <end position="298"/>
    </location>
</feature>
<feature type="helix" evidence="21">
    <location>
        <begin position="299"/>
        <end position="302"/>
    </location>
</feature>
<feature type="strand" evidence="18">
    <location>
        <begin position="308"/>
        <end position="310"/>
    </location>
</feature>
<feature type="strand" evidence="21">
    <location>
        <begin position="313"/>
        <end position="322"/>
    </location>
</feature>
<feature type="strand" evidence="21">
    <location>
        <begin position="325"/>
        <end position="331"/>
    </location>
</feature>
<feature type="strand" evidence="21">
    <location>
        <begin position="333"/>
        <end position="338"/>
    </location>
</feature>
<feature type="turn" evidence="22">
    <location>
        <begin position="340"/>
        <end position="342"/>
    </location>
</feature>
<feature type="strand" evidence="21">
    <location>
        <begin position="343"/>
        <end position="348"/>
    </location>
</feature>
<feature type="strand" evidence="18">
    <location>
        <begin position="353"/>
        <end position="355"/>
    </location>
</feature>
<feature type="helix" evidence="21">
    <location>
        <begin position="356"/>
        <end position="358"/>
    </location>
</feature>
<feature type="strand" evidence="21">
    <location>
        <begin position="361"/>
        <end position="364"/>
    </location>
</feature>
<feature type="strand" evidence="21">
    <location>
        <begin position="367"/>
        <end position="373"/>
    </location>
</feature>
<feature type="strand" evidence="21">
    <location>
        <begin position="376"/>
        <end position="382"/>
    </location>
</feature>
<feature type="helix" evidence="21">
    <location>
        <begin position="384"/>
        <end position="390"/>
    </location>
</feature>
<feature type="helix" evidence="21">
    <location>
        <begin position="391"/>
        <end position="408"/>
    </location>
</feature>
<feature type="strand" evidence="21">
    <location>
        <begin position="415"/>
        <end position="424"/>
    </location>
</feature>
<feature type="strand" evidence="21">
    <location>
        <begin position="426"/>
        <end position="430"/>
    </location>
</feature>
<feature type="strand" evidence="21">
    <location>
        <begin position="435"/>
        <end position="439"/>
    </location>
</feature>
<feature type="helix" evidence="21">
    <location>
        <begin position="440"/>
        <end position="442"/>
    </location>
</feature>
<feature type="turn" evidence="21">
    <location>
        <begin position="447"/>
        <end position="449"/>
    </location>
</feature>
<feature type="helix" evidence="21">
    <location>
        <begin position="452"/>
        <end position="468"/>
    </location>
</feature>
<feature type="turn" evidence="21">
    <location>
        <begin position="472"/>
        <end position="474"/>
    </location>
</feature>
<feature type="strand" evidence="21">
    <location>
        <begin position="475"/>
        <end position="479"/>
    </location>
</feature>
<feature type="helix" evidence="21">
    <location>
        <begin position="480"/>
        <end position="483"/>
    </location>
</feature>
<feature type="helix" evidence="21">
    <location>
        <begin position="484"/>
        <end position="501"/>
    </location>
</feature>
<feature type="helix" evidence="21">
    <location>
        <begin position="503"/>
        <end position="505"/>
    </location>
</feature>
<feature type="helix" evidence="21">
    <location>
        <begin position="508"/>
        <end position="522"/>
    </location>
</feature>
<feature type="strand" evidence="19">
    <location>
        <begin position="523"/>
        <end position="526"/>
    </location>
</feature>
<feature type="helix" evidence="21">
    <location>
        <begin position="537"/>
        <end position="542"/>
    </location>
</feature>
<feature type="helix" evidence="21">
    <location>
        <begin position="546"/>
        <end position="562"/>
    </location>
</feature>
<feature type="helix" evidence="21">
    <location>
        <begin position="565"/>
        <end position="579"/>
    </location>
</feature>
<feature type="strand" evidence="21">
    <location>
        <begin position="582"/>
        <end position="584"/>
    </location>
</feature>
<feature type="helix" evidence="21">
    <location>
        <begin position="586"/>
        <end position="597"/>
    </location>
</feature>
<feature type="strand" evidence="17">
    <location>
        <begin position="600"/>
        <end position="602"/>
    </location>
</feature>
<feature type="helix" evidence="21">
    <location>
        <begin position="603"/>
        <end position="612"/>
    </location>
</feature>
<feature type="strand" evidence="21">
    <location>
        <begin position="613"/>
        <end position="615"/>
    </location>
</feature>
<feature type="strand" evidence="21">
    <location>
        <begin position="617"/>
        <end position="624"/>
    </location>
</feature>
<feature type="strand" evidence="21">
    <location>
        <begin position="627"/>
        <end position="634"/>
    </location>
</feature>
<feature type="strand" evidence="21">
    <location>
        <begin position="654"/>
        <end position="662"/>
    </location>
</feature>
<feature type="strand" evidence="18">
    <location>
        <begin position="663"/>
        <end position="665"/>
    </location>
</feature>
<feature type="strand" evidence="21">
    <location>
        <begin position="667"/>
        <end position="674"/>
    </location>
</feature>
<feature type="strand" evidence="21">
    <location>
        <begin position="676"/>
        <end position="682"/>
    </location>
</feature>
<feature type="strand" evidence="21">
    <location>
        <begin position="687"/>
        <end position="693"/>
    </location>
</feature>
<feature type="helix" evidence="21">
    <location>
        <begin position="694"/>
        <end position="696"/>
    </location>
</feature>
<feature type="strand" evidence="21">
    <location>
        <begin position="698"/>
        <end position="704"/>
    </location>
</feature>
<feature type="helix" evidence="21">
    <location>
        <begin position="706"/>
        <end position="718"/>
    </location>
</feature>
<feature type="helix" evidence="21">
    <location>
        <begin position="720"/>
        <end position="722"/>
    </location>
</feature>
<feature type="helix" evidence="21">
    <location>
        <begin position="725"/>
        <end position="741"/>
    </location>
</feature>
<feature type="strand" evidence="20">
    <location>
        <begin position="742"/>
        <end position="744"/>
    </location>
</feature>
<feature type="helix" evidence="21">
    <location>
        <begin position="746"/>
        <end position="753"/>
    </location>
</feature>
<feature type="helix" evidence="21">
    <location>
        <begin position="754"/>
        <end position="758"/>
    </location>
</feature>
<feature type="helix" evidence="21">
    <location>
        <begin position="762"/>
        <end position="782"/>
    </location>
</feature>
<feature type="helix" evidence="21">
    <location>
        <begin position="785"/>
        <end position="804"/>
    </location>
</feature>
<feature type="strand" evidence="21">
    <location>
        <begin position="808"/>
        <end position="810"/>
    </location>
</feature>
<feature type="helix" evidence="21">
    <location>
        <begin position="814"/>
        <end position="829"/>
    </location>
</feature>
<feature type="helix" evidence="21">
    <location>
        <begin position="835"/>
        <end position="847"/>
    </location>
</feature>
<feature type="turn" evidence="21">
    <location>
        <begin position="848"/>
        <end position="850"/>
    </location>
</feature>
<feature type="turn" evidence="21">
    <location>
        <begin position="857"/>
        <end position="859"/>
    </location>
</feature>
<feature type="helix" evidence="21">
    <location>
        <begin position="860"/>
        <end position="867"/>
    </location>
</feature>
<feature type="helix" evidence="21">
    <location>
        <begin position="871"/>
        <end position="881"/>
    </location>
</feature>
<feature type="helix" evidence="21">
    <location>
        <begin position="887"/>
        <end position="897"/>
    </location>
</feature>
<feature type="helix" evidence="21">
    <location>
        <begin position="903"/>
        <end position="915"/>
    </location>
</feature>
<feature type="strand" evidence="22">
    <location>
        <begin position="917"/>
        <end position="919"/>
    </location>
</feature>
<feature type="helix" evidence="21">
    <location>
        <begin position="921"/>
        <end position="923"/>
    </location>
</feature>
<feature type="helix" evidence="21">
    <location>
        <begin position="924"/>
        <end position="933"/>
    </location>
</feature>
<feature type="helix" evidence="21">
    <location>
        <begin position="935"/>
        <end position="947"/>
    </location>
</feature>
<feature type="helix" evidence="21">
    <location>
        <begin position="949"/>
        <end position="955"/>
    </location>
</feature>
<feature type="helix" evidence="21">
    <location>
        <begin position="961"/>
        <end position="969"/>
    </location>
</feature>
<feature type="turn" evidence="21">
    <location>
        <begin position="970"/>
        <end position="973"/>
    </location>
</feature>
<feature type="helix" evidence="21">
    <location>
        <begin position="977"/>
        <end position="988"/>
    </location>
</feature>
<feature type="helix" evidence="21">
    <location>
        <begin position="992"/>
        <end position="995"/>
    </location>
</feature>
<feature type="helix" evidence="21">
    <location>
        <begin position="998"/>
        <end position="1024"/>
    </location>
</feature>
<comment type="function">
    <text evidence="5 6 7">Release of an N-terminal amino acid, cleaves before cysteine, leucine as well as other amino acids. Degrades peptide hormones such as oxytocin, vasopressin and angiotensin III, and plays a role in maintaining homeostasis during pregnancy. May be involved in the inactivation of neuronal peptides in the brain. Cleaves Met-enkephalin and dynorphin. Binds angiotensin IV and may be the angiotensin IV receptor in the brain.</text>
</comment>
<comment type="catalytic activity">
    <reaction evidence="5 7">
        <text>Release of an N-terminal amino acid, Cys-|-Xaa-, in which the half-cystine residue is involved in a disulfide loop, notably in oxytocin or vasopressin. Hydrolysis rates on a range of aminoacyl arylamides exceed that for the cystinyl derivative, however.</text>
        <dbReference type="EC" id="3.4.11.3"/>
    </reaction>
</comment>
<comment type="cofactor">
    <cofactor evidence="1">
        <name>Zn(2+)</name>
        <dbReference type="ChEBI" id="CHEBI:29105"/>
    </cofactor>
    <text evidence="1">Binds 1 zinc ion per subunit.</text>
</comment>
<comment type="subunit">
    <text>Homodimer. Binds tankyrases 1 and 2.</text>
</comment>
<comment type="interaction">
    <interactant intactId="EBI-2805360">
        <id>Q9UIQ6</id>
    </interactant>
    <interactant intactId="EBI-743099">
        <id>Q969F0</id>
        <label>FATE1</label>
    </interactant>
    <organismsDiffer>false</organismsDiffer>
    <experiments>3</experiments>
</comment>
<comment type="interaction">
    <interactant intactId="EBI-2805360">
        <id>Q9UIQ6</id>
    </interactant>
    <interactant intactId="EBI-307352">
        <id>Q04864</id>
        <label>REL</label>
    </interactant>
    <organismsDiffer>false</organismsDiffer>
    <experiments>3</experiments>
</comment>
<comment type="interaction">
    <interactant intactId="EBI-2805360">
        <id>Q9UIQ6</id>
    </interactant>
    <interactant intactId="EBI-533224">
        <id>P15884</id>
        <label>TCF4</label>
    </interactant>
    <organismsDiffer>false</organismsDiffer>
    <experiments>3</experiments>
</comment>
<comment type="interaction">
    <interactant intactId="EBI-2805360">
        <id>Q9UIQ6</id>
    </interactant>
    <interactant intactId="EBI-4398527">
        <id>Q9H2K2</id>
        <label>TNKS2</label>
    </interactant>
    <organismsDiffer>false</organismsDiffer>
    <experiments>3</experiments>
</comment>
<comment type="interaction">
    <interactant intactId="EBI-12133176">
        <id>Q9UIQ6-2</id>
    </interactant>
    <interactant intactId="EBI-13059134">
        <id>Q13520</id>
        <label>AQP6</label>
    </interactant>
    <organismsDiffer>false</organismsDiffer>
    <experiments>3</experiments>
</comment>
<comment type="interaction">
    <interactant intactId="EBI-12133176">
        <id>Q9UIQ6-2</id>
    </interactant>
    <interactant intactId="EBI-12808270">
        <id>P07307-3</id>
        <label>ASGR2</label>
    </interactant>
    <organismsDiffer>false</organismsDiffer>
    <experiments>3</experiments>
</comment>
<comment type="interaction">
    <interactant intactId="EBI-12133176">
        <id>Q9UIQ6-2</id>
    </interactant>
    <interactant intactId="EBI-2130213">
        <id>Q99675</id>
        <label>CGRRF1</label>
    </interactant>
    <organismsDiffer>false</organismsDiffer>
    <experiments>3</experiments>
</comment>
<comment type="interaction">
    <interactant intactId="EBI-12133176">
        <id>Q9UIQ6-2</id>
    </interactant>
    <interactant intactId="EBI-1188472">
        <id>P78358</id>
        <label>CTAG1B</label>
    </interactant>
    <organismsDiffer>false</organismsDiffer>
    <experiments>3</experiments>
</comment>
<comment type="interaction">
    <interactant intactId="EBI-12133176">
        <id>Q9UIQ6-2</id>
    </interactant>
    <interactant intactId="EBI-18938272">
        <id>Q96KR6</id>
        <label>FAM210B</label>
    </interactant>
    <organismsDiffer>false</organismsDiffer>
    <experiments>3</experiments>
</comment>
<comment type="interaction">
    <interactant intactId="EBI-12133176">
        <id>Q9UIQ6-2</id>
    </interactant>
    <interactant intactId="EBI-743099">
        <id>Q969F0</id>
        <label>FATE1</label>
    </interactant>
    <organismsDiffer>false</organismsDiffer>
    <experiments>3</experiments>
</comment>
<comment type="interaction">
    <interactant intactId="EBI-12133176">
        <id>Q9UIQ6-2</id>
    </interactant>
    <interactant intactId="EBI-1058791">
        <id>Q9UJ14</id>
        <label>GGT7</label>
    </interactant>
    <organismsDiffer>false</organismsDiffer>
    <experiments>3</experiments>
</comment>
<comment type="interaction">
    <interactant intactId="EBI-12133176">
        <id>Q9UIQ6-2</id>
    </interactant>
    <interactant intactId="EBI-18076404">
        <id>O15529</id>
        <label>GPR42</label>
    </interactant>
    <organismsDiffer>false</organismsDiffer>
    <experiments>3</experiments>
</comment>
<comment type="interaction">
    <interactant intactId="EBI-12133176">
        <id>Q9UIQ6-2</id>
    </interactant>
    <interactant intactId="EBI-11721746">
        <id>Q8TED1</id>
        <label>GPX8</label>
    </interactant>
    <organismsDiffer>false</organismsDiffer>
    <experiments>3</experiments>
</comment>
<comment type="interaction">
    <interactant intactId="EBI-12133176">
        <id>Q9UIQ6-2</id>
    </interactant>
    <interactant intactId="EBI-1052304">
        <id>Q8NBQ5</id>
        <label>HSD17B11</label>
    </interactant>
    <organismsDiffer>false</organismsDiffer>
    <experiments>3</experiments>
</comment>
<comment type="interaction">
    <interactant intactId="EBI-12133176">
        <id>Q9UIQ6-2</id>
    </interactant>
    <interactant intactId="EBI-11911016">
        <id>P80188</id>
        <label>LCN2</label>
    </interactant>
    <organismsDiffer>false</organismsDiffer>
    <experiments>3</experiments>
</comment>
<comment type="interaction">
    <interactant intactId="EBI-12133176">
        <id>Q9UIQ6-2</id>
    </interactant>
    <interactant intactId="EBI-2820517">
        <id>Q8TAF8</id>
        <label>LHFPL5</label>
    </interactant>
    <organismsDiffer>false</organismsDiffer>
    <experiments>3</experiments>
</comment>
<comment type="interaction">
    <interactant intactId="EBI-12133176">
        <id>Q9UIQ6-2</id>
    </interactant>
    <interactant intactId="EBI-6163737">
        <id>Q8N4V1</id>
        <label>MMGT1</label>
    </interactant>
    <organismsDiffer>false</organismsDiffer>
    <experiments>3</experiments>
</comment>
<comment type="interaction">
    <interactant intactId="EBI-12133176">
        <id>Q9UIQ6-2</id>
    </interactant>
    <interactant intactId="EBI-7545592">
        <id>Q9H6H4</id>
        <label>REEP4</label>
    </interactant>
    <organismsDiffer>false</organismsDiffer>
    <experiments>3</experiments>
</comment>
<comment type="interaction">
    <interactant intactId="EBI-12133176">
        <id>Q9UIQ6-2</id>
    </interactant>
    <interactant intactId="EBI-13389236">
        <id>Q7Z769</id>
        <label>SLC35E3</label>
    </interactant>
    <organismsDiffer>false</organismsDiffer>
    <experiments>3</experiments>
</comment>
<comment type="interaction">
    <interactant intactId="EBI-12133176">
        <id>Q9UIQ6-2</id>
    </interactant>
    <interactant intactId="EBI-2823239">
        <id>Q9NUM3</id>
        <label>SLC39A9</label>
    </interactant>
    <organismsDiffer>false</organismsDiffer>
    <experiments>3</experiments>
</comment>
<comment type="interaction">
    <interactant intactId="EBI-12133176">
        <id>Q9UIQ6-2</id>
    </interactant>
    <interactant intactId="EBI-17280858">
        <id>Q8WWF3</id>
        <label>SSMEM1</label>
    </interactant>
    <organismsDiffer>false</organismsDiffer>
    <experiments>3</experiments>
</comment>
<comment type="interaction">
    <interactant intactId="EBI-12133176">
        <id>Q9UIQ6-2</id>
    </interactant>
    <interactant intactId="EBI-1211440">
        <id>P27105</id>
        <label>STOM</label>
    </interactant>
    <organismsDiffer>false</organismsDiffer>
    <experiments>3</experiments>
</comment>
<comment type="interaction">
    <interactant intactId="EBI-12133176">
        <id>Q9UIQ6-2</id>
    </interactant>
    <interactant intactId="EBI-12847034">
        <id>P59542</id>
        <label>TAS2R19</label>
    </interactant>
    <organismsDiffer>false</organismsDiffer>
    <experiments>3</experiments>
</comment>
<comment type="interaction">
    <interactant intactId="EBI-12133176">
        <id>Q9UIQ6-2</id>
    </interactant>
    <interactant intactId="EBI-12947623">
        <id>Q96MV1</id>
        <label>TLCD4</label>
    </interactant>
    <organismsDiffer>false</organismsDiffer>
    <experiments>3</experiments>
</comment>
<comment type="interaction">
    <interactant intactId="EBI-12133176">
        <id>Q9UIQ6-2</id>
    </interactant>
    <interactant intactId="EBI-11722971">
        <id>Q53FP2</id>
        <label>TMEM35A</label>
    </interactant>
    <organismsDiffer>false</organismsDiffer>
    <experiments>3</experiments>
</comment>
<comment type="interaction">
    <interactant intactId="EBI-12133176">
        <id>Q9UIQ6-2</id>
    </interactant>
    <interactant intactId="EBI-741480">
        <id>Q9UMX0</id>
        <label>UBQLN1</label>
    </interactant>
    <organismsDiffer>false</organismsDiffer>
    <experiments>3</experiments>
</comment>
<comment type="interaction">
    <interactant intactId="EBI-12133176">
        <id>Q9UIQ6-2</id>
    </interactant>
    <interactant intactId="EBI-13356252">
        <id>Q86WB7-2</id>
        <label>UNC93A</label>
    </interactant>
    <organismsDiffer>false</organismsDiffer>
    <experiments>3</experiments>
</comment>
<comment type="subcellular location">
    <subcellularLocation>
        <location evidence="5">Cell membrane</location>
        <topology evidence="5">Single-pass type II membrane protein</topology>
    </subcellularLocation>
    <text>In brain only the membrane-bound form is found. The protein resides in intracellular vesicles together with GLUT4 and can then translocate to the cell surface in response to insulin and/or oxytocin. Localization may be determined by dileucine internalization motifs, and/or by interaction with tankyrases.</text>
</comment>
<comment type="subcellular location">
    <molecule>Leucyl-cystinyl aminopeptidase, pregnancy serum form</molecule>
    <subcellularLocation>
        <location>Secreted</location>
    </subcellularLocation>
    <text>During pregnancy serum levels are low in the first trimester, rise progressively during the second and third trimester and decrease rapidly after parturition.</text>
</comment>
<comment type="alternative products">
    <event type="alternative splicing"/>
    <isoform>
        <id>Q9UIQ6-1</id>
        <name>1</name>
        <sequence type="displayed"/>
    </isoform>
    <isoform>
        <id>Q9UIQ6-2</id>
        <name>2</name>
        <sequence type="described" ref="VSP_005448"/>
    </isoform>
    <isoform>
        <id>Q9UIQ6-3</id>
        <name>3</name>
        <sequence type="described" ref="VSP_005449"/>
    </isoform>
    <text>Experimental confirmation may be lacking for some isoforms.</text>
</comment>
<comment type="tissue specificity">
    <text evidence="5 9 10">Highly expressed in placenta, heart, kidney and small intestine. Detected at lower levels in neuronal cells in the brain, in skeletal muscle, spleen, liver, testes and colon.</text>
</comment>
<comment type="PTM">
    <text>The pregnancy serum form is derived from the membrane-bound form by proteolytic processing.</text>
</comment>
<comment type="PTM">
    <text evidence="8">N-glycosylated.</text>
</comment>
<comment type="similarity">
    <text evidence="13">Belongs to the peptidase M1 family.</text>
</comment>
<comment type="sequence caution" evidence="13">
    <conflict type="erroneous initiation">
        <sequence resource="EMBL-CDS" id="BAA09436"/>
    </conflict>
</comment>
<comment type="sequence caution" evidence="13">
    <conflict type="frameshift">
        <sequence resource="EMBL-CDS" id="BAD92120"/>
    </conflict>
</comment>
<evidence type="ECO:0000250" key="1"/>
<evidence type="ECO:0000250" key="2">
    <source>
        <dbReference type="UniProtKB" id="Q8C129"/>
    </source>
</evidence>
<evidence type="ECO:0000255" key="3"/>
<evidence type="ECO:0000255" key="4">
    <source>
        <dbReference type="PROSITE-ProRule" id="PRU10095"/>
    </source>
</evidence>
<evidence type="ECO:0000269" key="5">
    <source>
    </source>
</evidence>
<evidence type="ECO:0000269" key="6">
    <source>
    </source>
</evidence>
<evidence type="ECO:0000269" key="7">
    <source>
    </source>
</evidence>
<evidence type="ECO:0000269" key="8">
    <source>
    </source>
</evidence>
<evidence type="ECO:0000269" key="9">
    <source>
    </source>
</evidence>
<evidence type="ECO:0000269" key="10">
    <source>
    </source>
</evidence>
<evidence type="ECO:0000303" key="11">
    <source>
    </source>
</evidence>
<evidence type="ECO:0000303" key="12">
    <source>
    </source>
</evidence>
<evidence type="ECO:0000305" key="13"/>
<evidence type="ECO:0007744" key="14">
    <source>
    </source>
</evidence>
<evidence type="ECO:0007744" key="15">
    <source>
    </source>
</evidence>
<evidence type="ECO:0007744" key="16">
    <source>
    </source>
</evidence>
<evidence type="ECO:0007829" key="17">
    <source>
        <dbReference type="PDB" id="4P8Q"/>
    </source>
</evidence>
<evidence type="ECO:0007829" key="18">
    <source>
        <dbReference type="PDB" id="4PJ6"/>
    </source>
</evidence>
<evidence type="ECO:0007829" key="19">
    <source>
        <dbReference type="PDB" id="4Z7I"/>
    </source>
</evidence>
<evidence type="ECO:0007829" key="20">
    <source>
        <dbReference type="PDB" id="5C97"/>
    </source>
</evidence>
<evidence type="ECO:0007829" key="21">
    <source>
        <dbReference type="PDB" id="5MJ6"/>
    </source>
</evidence>
<evidence type="ECO:0007829" key="22">
    <source>
        <dbReference type="PDB" id="8CGP"/>
    </source>
</evidence>
<evidence type="ECO:0007829" key="23">
    <source>
        <dbReference type="PDB" id="8CGW"/>
    </source>
</evidence>
<evidence type="ECO:0007829" key="24">
    <source>
        <dbReference type="PDB" id="8P0I"/>
    </source>
</evidence>
<protein>
    <recommendedName>
        <fullName>Leucyl-cystinyl aminopeptidase</fullName>
        <shortName>Cystinyl aminopeptidase</shortName>
        <ecNumber>3.4.11.3</ecNumber>
    </recommendedName>
    <alternativeName>
        <fullName>Insulin-regulated membrane aminopeptidase</fullName>
    </alternativeName>
    <alternativeName>
        <fullName>Insulin-responsive aminopeptidase</fullName>
        <shortName>IRAP</shortName>
    </alternativeName>
    <alternativeName>
        <fullName>Oxytocinase</fullName>
        <shortName>OTase</shortName>
    </alternativeName>
    <alternativeName>
        <fullName>Placental leucine aminopeptidase</fullName>
        <shortName>P-LAP</shortName>
    </alternativeName>
    <component>
        <recommendedName>
            <fullName>Leucyl-cystinyl aminopeptidase, pregnancy serum form</fullName>
        </recommendedName>
    </component>
</protein>
<name>LCAP_HUMAN</name>
<keyword id="KW-0002">3D-structure</keyword>
<keyword id="KW-0007">Acetylation</keyword>
<keyword id="KW-0025">Alternative splicing</keyword>
<keyword id="KW-0031">Aminopeptidase</keyword>
<keyword id="KW-1003">Cell membrane</keyword>
<keyword id="KW-0903">Direct protein sequencing</keyword>
<keyword id="KW-0325">Glycoprotein</keyword>
<keyword id="KW-0378">Hydrolase</keyword>
<keyword id="KW-0472">Membrane</keyword>
<keyword id="KW-0479">Metal-binding</keyword>
<keyword id="KW-0482">Metalloprotease</keyword>
<keyword id="KW-0597">Phosphoprotein</keyword>
<keyword id="KW-0645">Protease</keyword>
<keyword id="KW-1267">Proteomics identification</keyword>
<keyword id="KW-1185">Reference proteome</keyword>
<keyword id="KW-0964">Secreted</keyword>
<keyword id="KW-0735">Signal-anchor</keyword>
<keyword id="KW-0812">Transmembrane</keyword>
<keyword id="KW-1133">Transmembrane helix</keyword>
<keyword id="KW-0862">Zinc</keyword>
<gene>
    <name type="primary">LNPEP</name>
    <name type="synonym">OTASE</name>
</gene>
<dbReference type="EC" id="3.4.11.3"/>
<dbReference type="EMBL" id="D50810">
    <property type="protein sequence ID" value="BAA09436.1"/>
    <property type="status" value="ALT_INIT"/>
    <property type="molecule type" value="mRNA"/>
</dbReference>
<dbReference type="EMBL" id="U62768">
    <property type="protein sequence ID" value="AAB66672.1"/>
    <property type="molecule type" value="mRNA"/>
</dbReference>
<dbReference type="EMBL" id="U62769">
    <property type="protein sequence ID" value="AAB66673.1"/>
    <property type="molecule type" value="mRNA"/>
</dbReference>
<dbReference type="EMBL" id="AJ131023">
    <property type="protein sequence ID" value="CAB61646.1"/>
    <property type="molecule type" value="Genomic_DNA"/>
</dbReference>
<dbReference type="EMBL" id="AJ131025">
    <property type="protein sequence ID" value="CAB61646.1"/>
    <property type="status" value="JOINED"/>
    <property type="molecule type" value="Genomic_DNA"/>
</dbReference>
<dbReference type="EMBL" id="AJ131026">
    <property type="protein sequence ID" value="CAB61646.1"/>
    <property type="status" value="JOINED"/>
    <property type="molecule type" value="Genomic_DNA"/>
</dbReference>
<dbReference type="EMBL" id="AJ131027">
    <property type="protein sequence ID" value="CAB61646.1"/>
    <property type="status" value="JOINED"/>
    <property type="molecule type" value="Genomic_DNA"/>
</dbReference>
<dbReference type="EMBL" id="AJ131028">
    <property type="protein sequence ID" value="CAB61646.1"/>
    <property type="status" value="JOINED"/>
    <property type="molecule type" value="Genomic_DNA"/>
</dbReference>
<dbReference type="EMBL" id="AJ131029">
    <property type="protein sequence ID" value="CAB61646.1"/>
    <property type="status" value="JOINED"/>
    <property type="molecule type" value="Genomic_DNA"/>
</dbReference>
<dbReference type="EMBL" id="AJ131030">
    <property type="protein sequence ID" value="CAB61646.1"/>
    <property type="status" value="JOINED"/>
    <property type="molecule type" value="Genomic_DNA"/>
</dbReference>
<dbReference type="EMBL" id="AJ131031">
    <property type="protein sequence ID" value="CAB61646.1"/>
    <property type="status" value="JOINED"/>
    <property type="molecule type" value="Genomic_DNA"/>
</dbReference>
<dbReference type="EMBL" id="AJ131032">
    <property type="protein sequence ID" value="CAB61646.1"/>
    <property type="status" value="JOINED"/>
    <property type="molecule type" value="Genomic_DNA"/>
</dbReference>
<dbReference type="EMBL" id="AJ131033">
    <property type="protein sequence ID" value="CAB61646.1"/>
    <property type="status" value="JOINED"/>
    <property type="molecule type" value="Genomic_DNA"/>
</dbReference>
<dbReference type="EMBL" id="AJ131034">
    <property type="protein sequence ID" value="CAB61646.1"/>
    <property type="status" value="JOINED"/>
    <property type="molecule type" value="Genomic_DNA"/>
</dbReference>
<dbReference type="EMBL" id="AJ131035">
    <property type="protein sequence ID" value="CAB61646.1"/>
    <property type="status" value="JOINED"/>
    <property type="molecule type" value="Genomic_DNA"/>
</dbReference>
<dbReference type="EMBL" id="AJ131036">
    <property type="protein sequence ID" value="CAB61646.1"/>
    <property type="status" value="JOINED"/>
    <property type="molecule type" value="Genomic_DNA"/>
</dbReference>
<dbReference type="EMBL" id="AJ131037">
    <property type="protein sequence ID" value="CAB61646.1"/>
    <property type="status" value="JOINED"/>
    <property type="molecule type" value="Genomic_DNA"/>
</dbReference>
<dbReference type="EMBL" id="AJ131038">
    <property type="protein sequence ID" value="CAB61646.1"/>
    <property type="status" value="JOINED"/>
    <property type="molecule type" value="Genomic_DNA"/>
</dbReference>
<dbReference type="EMBL" id="AJ131039">
    <property type="protein sequence ID" value="CAB61646.1"/>
    <property type="status" value="JOINED"/>
    <property type="molecule type" value="Genomic_DNA"/>
</dbReference>
<dbReference type="EMBL" id="AJ131025">
    <property type="protein sequence ID" value="CAB94753.1"/>
    <property type="molecule type" value="Genomic_DNA"/>
</dbReference>
<dbReference type="EMBL" id="AJ131026">
    <property type="protein sequence ID" value="CAB94753.1"/>
    <property type="status" value="JOINED"/>
    <property type="molecule type" value="Genomic_DNA"/>
</dbReference>
<dbReference type="EMBL" id="AJ131027">
    <property type="protein sequence ID" value="CAB94753.1"/>
    <property type="status" value="JOINED"/>
    <property type="molecule type" value="Genomic_DNA"/>
</dbReference>
<dbReference type="EMBL" id="AJ131028">
    <property type="protein sequence ID" value="CAB94753.1"/>
    <property type="status" value="JOINED"/>
    <property type="molecule type" value="Genomic_DNA"/>
</dbReference>
<dbReference type="EMBL" id="AJ131029">
    <property type="protein sequence ID" value="CAB94753.1"/>
    <property type="status" value="JOINED"/>
    <property type="molecule type" value="Genomic_DNA"/>
</dbReference>
<dbReference type="EMBL" id="AJ131030">
    <property type="protein sequence ID" value="CAB94753.1"/>
    <property type="status" value="JOINED"/>
    <property type="molecule type" value="Genomic_DNA"/>
</dbReference>
<dbReference type="EMBL" id="AJ131031">
    <property type="protein sequence ID" value="CAB94753.1"/>
    <property type="status" value="JOINED"/>
    <property type="molecule type" value="Genomic_DNA"/>
</dbReference>
<dbReference type="EMBL" id="AJ131032">
    <property type="protein sequence ID" value="CAB94753.1"/>
    <property type="status" value="JOINED"/>
    <property type="molecule type" value="Genomic_DNA"/>
</dbReference>
<dbReference type="EMBL" id="AJ131033">
    <property type="protein sequence ID" value="CAB94753.1"/>
    <property type="status" value="JOINED"/>
    <property type="molecule type" value="Genomic_DNA"/>
</dbReference>
<dbReference type="EMBL" id="AJ131034">
    <property type="protein sequence ID" value="CAB94753.1"/>
    <property type="status" value="JOINED"/>
    <property type="molecule type" value="Genomic_DNA"/>
</dbReference>
<dbReference type="EMBL" id="AJ131035">
    <property type="protein sequence ID" value="CAB94753.1"/>
    <property type="status" value="JOINED"/>
    <property type="molecule type" value="Genomic_DNA"/>
</dbReference>
<dbReference type="EMBL" id="AJ131036">
    <property type="protein sequence ID" value="CAB94753.1"/>
    <property type="status" value="JOINED"/>
    <property type="molecule type" value="Genomic_DNA"/>
</dbReference>
<dbReference type="EMBL" id="AJ131037">
    <property type="protein sequence ID" value="CAB94753.1"/>
    <property type="status" value="JOINED"/>
    <property type="molecule type" value="Genomic_DNA"/>
</dbReference>
<dbReference type="EMBL" id="AJ131038">
    <property type="protein sequence ID" value="CAB94753.1"/>
    <property type="status" value="JOINED"/>
    <property type="molecule type" value="Genomic_DNA"/>
</dbReference>
<dbReference type="EMBL" id="AJ131039">
    <property type="protein sequence ID" value="CAB94753.1"/>
    <property type="status" value="JOINED"/>
    <property type="molecule type" value="Genomic_DNA"/>
</dbReference>
<dbReference type="EMBL" id="AB208883">
    <property type="protein sequence ID" value="BAD92120.1"/>
    <property type="status" value="ALT_FRAME"/>
    <property type="molecule type" value="mRNA"/>
</dbReference>
<dbReference type="CCDS" id="CCDS4087.1">
    <molecule id="Q9UIQ6-1"/>
</dbReference>
<dbReference type="CCDS" id="CCDS43346.1">
    <molecule id="Q9UIQ6-2"/>
</dbReference>
<dbReference type="PIR" id="A59383">
    <property type="entry name" value="A59383"/>
</dbReference>
<dbReference type="PIR" id="A59384">
    <property type="entry name" value="A59384"/>
</dbReference>
<dbReference type="RefSeq" id="NP_005566.2">
    <molecule id="Q9UIQ6-1"/>
    <property type="nucleotide sequence ID" value="NM_005575.3"/>
</dbReference>
<dbReference type="RefSeq" id="NP_787116.2">
    <molecule id="Q9UIQ6-2"/>
    <property type="nucleotide sequence ID" value="NM_175920.4"/>
</dbReference>
<dbReference type="PDB" id="4P8Q">
    <property type="method" value="X-ray"/>
    <property type="resolution" value="3.02 A"/>
    <property type="chains" value="A/B=155-1025"/>
</dbReference>
<dbReference type="PDB" id="4PJ6">
    <property type="method" value="X-ray"/>
    <property type="resolution" value="2.96 A"/>
    <property type="chains" value="A/B=155-1025"/>
</dbReference>
<dbReference type="PDB" id="4Z7I">
    <property type="method" value="X-ray"/>
    <property type="resolution" value="3.31 A"/>
    <property type="chains" value="A/B=155-1025"/>
</dbReference>
<dbReference type="PDB" id="5C97">
    <property type="method" value="X-ray"/>
    <property type="resolution" value="3.37 A"/>
    <property type="chains" value="A/B=155-1025"/>
</dbReference>
<dbReference type="PDB" id="5JHQ">
    <property type="method" value="X-ray"/>
    <property type="resolution" value="3.20 A"/>
    <property type="chains" value="E/F/G/H/I/J/K/L=92-107"/>
</dbReference>
<dbReference type="PDB" id="5MJ6">
    <property type="method" value="X-ray"/>
    <property type="resolution" value="2.53 A"/>
    <property type="chains" value="A/B=155-1025"/>
</dbReference>
<dbReference type="PDB" id="7ZYF">
    <property type="method" value="X-ray"/>
    <property type="resolution" value="2.81 A"/>
    <property type="chains" value="A/B=155-1025"/>
</dbReference>
<dbReference type="PDB" id="8CGP">
    <property type="method" value="X-ray"/>
    <property type="resolution" value="2.62 A"/>
    <property type="chains" value="A/B=155-1025"/>
</dbReference>
<dbReference type="PDB" id="8CGW">
    <property type="method" value="X-ray"/>
    <property type="resolution" value="3.03 A"/>
    <property type="chains" value="A/B=155-1025"/>
</dbReference>
<dbReference type="PDB" id="8P0I">
    <property type="method" value="X-ray"/>
    <property type="resolution" value="3.50 A"/>
    <property type="chains" value="A/B=155-1025"/>
</dbReference>
<dbReference type="PDBsum" id="4P8Q"/>
<dbReference type="PDBsum" id="4PJ6"/>
<dbReference type="PDBsum" id="4Z7I"/>
<dbReference type="PDBsum" id="5C97"/>
<dbReference type="PDBsum" id="5JHQ"/>
<dbReference type="PDBsum" id="5MJ6"/>
<dbReference type="PDBsum" id="7ZYF"/>
<dbReference type="PDBsum" id="8CGP"/>
<dbReference type="PDBsum" id="8CGW"/>
<dbReference type="PDBsum" id="8P0I"/>
<dbReference type="SMR" id="Q9UIQ6"/>
<dbReference type="BioGRID" id="110196">
    <property type="interactions" value="215"/>
</dbReference>
<dbReference type="ELM" id="Q9UIQ6"/>
<dbReference type="FunCoup" id="Q9UIQ6">
    <property type="interactions" value="1221"/>
</dbReference>
<dbReference type="IntAct" id="Q9UIQ6">
    <property type="interactions" value="114"/>
</dbReference>
<dbReference type="MINT" id="Q9UIQ6"/>
<dbReference type="STRING" id="9606.ENSP00000231368"/>
<dbReference type="BindingDB" id="Q9UIQ6"/>
<dbReference type="ChEMBL" id="CHEMBL2693"/>
<dbReference type="DrugBank" id="DB00107">
    <property type="generic name" value="Oxytocin"/>
</dbReference>
<dbReference type="GuidetoPHARMACOLOGY" id="1570"/>
<dbReference type="MEROPS" id="M01.011"/>
<dbReference type="GlyConnect" id="1455">
    <property type="glycosylation" value="10 N-Linked glycans (2 sites)"/>
</dbReference>
<dbReference type="GlyCosmos" id="Q9UIQ6">
    <property type="glycosylation" value="17 sites, 10 glycans"/>
</dbReference>
<dbReference type="GlyGen" id="Q9UIQ6">
    <property type="glycosylation" value="22 sites, 56 N-linked glycans (11 sites), 2 O-linked glycans (3 sites)"/>
</dbReference>
<dbReference type="iPTMnet" id="Q9UIQ6"/>
<dbReference type="PhosphoSitePlus" id="Q9UIQ6"/>
<dbReference type="SwissPalm" id="Q9UIQ6"/>
<dbReference type="BioMuta" id="LNPEP"/>
<dbReference type="DMDM" id="145559489"/>
<dbReference type="jPOST" id="Q9UIQ6"/>
<dbReference type="MassIVE" id="Q9UIQ6"/>
<dbReference type="PaxDb" id="9606-ENSP00000231368"/>
<dbReference type="PeptideAtlas" id="Q9UIQ6"/>
<dbReference type="ProteomicsDB" id="84551">
    <molecule id="Q9UIQ6-1"/>
</dbReference>
<dbReference type="ProteomicsDB" id="84552">
    <molecule id="Q9UIQ6-2"/>
</dbReference>
<dbReference type="ProteomicsDB" id="84553">
    <molecule id="Q9UIQ6-3"/>
</dbReference>
<dbReference type="Pumba" id="Q9UIQ6"/>
<dbReference type="Antibodypedia" id="25094">
    <property type="antibodies" value="141 antibodies from 32 providers"/>
</dbReference>
<dbReference type="DNASU" id="4012"/>
<dbReference type="Ensembl" id="ENST00000231368.10">
    <molecule id="Q9UIQ6-1"/>
    <property type="protein sequence ID" value="ENSP00000231368.5"/>
    <property type="gene ID" value="ENSG00000113441.16"/>
</dbReference>
<dbReference type="Ensembl" id="ENST00000395770.3">
    <molecule id="Q9UIQ6-2"/>
    <property type="protein sequence ID" value="ENSP00000379117.3"/>
    <property type="gene ID" value="ENSG00000113441.16"/>
</dbReference>
<dbReference type="GeneID" id="4012"/>
<dbReference type="KEGG" id="hsa:4012"/>
<dbReference type="MANE-Select" id="ENST00000231368.10">
    <property type="protein sequence ID" value="ENSP00000231368.5"/>
    <property type="RefSeq nucleotide sequence ID" value="NM_005575.3"/>
    <property type="RefSeq protein sequence ID" value="NP_005566.2"/>
</dbReference>
<dbReference type="UCSC" id="uc003kmv.2">
    <molecule id="Q9UIQ6-1"/>
    <property type="organism name" value="human"/>
</dbReference>
<dbReference type="AGR" id="HGNC:6656"/>
<dbReference type="CTD" id="4012"/>
<dbReference type="DisGeNET" id="4012"/>
<dbReference type="GeneCards" id="LNPEP"/>
<dbReference type="HGNC" id="HGNC:6656">
    <property type="gene designation" value="LNPEP"/>
</dbReference>
<dbReference type="HPA" id="ENSG00000113441">
    <property type="expression patterns" value="Low tissue specificity"/>
</dbReference>
<dbReference type="MIM" id="151300">
    <property type="type" value="gene"/>
</dbReference>
<dbReference type="neXtProt" id="NX_Q9UIQ6"/>
<dbReference type="OpenTargets" id="ENSG00000113441"/>
<dbReference type="PharmGKB" id="PA30418"/>
<dbReference type="VEuPathDB" id="HostDB:ENSG00000113441"/>
<dbReference type="eggNOG" id="KOG1046">
    <property type="taxonomic scope" value="Eukaryota"/>
</dbReference>
<dbReference type="GeneTree" id="ENSGT00940000157902"/>
<dbReference type="HOGENOM" id="CLU_003705_2_2_1"/>
<dbReference type="InParanoid" id="Q9UIQ6"/>
<dbReference type="OMA" id="AWDFIQV"/>
<dbReference type="OrthoDB" id="10031169at2759"/>
<dbReference type="PAN-GO" id="Q9UIQ6">
    <property type="GO annotations" value="9 GO annotations based on evolutionary models"/>
</dbReference>
<dbReference type="PhylomeDB" id="Q9UIQ6"/>
<dbReference type="TreeFam" id="TF300395"/>
<dbReference type="BRENDA" id="3.4.11.3">
    <property type="organism ID" value="2681"/>
</dbReference>
<dbReference type="PathwayCommons" id="Q9UIQ6"/>
<dbReference type="Reactome" id="R-HSA-1236977">
    <property type="pathway name" value="Endosomal/Vacuolar pathway"/>
</dbReference>
<dbReference type="Reactome" id="R-HSA-1445148">
    <property type="pathway name" value="Translocation of SLC2A4 (GLUT4) to the plasma membrane"/>
</dbReference>
<dbReference type="Reactome" id="R-HSA-983168">
    <property type="pathway name" value="Antigen processing: Ubiquitination &amp; Proteasome degradation"/>
</dbReference>
<dbReference type="SABIO-RK" id="Q9UIQ6"/>
<dbReference type="SignaLink" id="Q9UIQ6"/>
<dbReference type="SIGNOR" id="Q9UIQ6"/>
<dbReference type="BioGRID-ORCS" id="4012">
    <property type="hits" value="12 hits in 1164 CRISPR screens"/>
</dbReference>
<dbReference type="ChiTaRS" id="LNPEP">
    <property type="organism name" value="human"/>
</dbReference>
<dbReference type="EvolutionaryTrace" id="Q9UIQ6"/>
<dbReference type="GeneWiki" id="Cystinyl_aminopeptidase"/>
<dbReference type="GenomeRNAi" id="4012"/>
<dbReference type="Pharos" id="Q9UIQ6">
    <property type="development level" value="Tchem"/>
</dbReference>
<dbReference type="PRO" id="PR:Q9UIQ6"/>
<dbReference type="Proteomes" id="UP000005640">
    <property type="component" value="Chromosome 5"/>
</dbReference>
<dbReference type="RNAct" id="Q9UIQ6">
    <property type="molecule type" value="protein"/>
</dbReference>
<dbReference type="Bgee" id="ENSG00000113441">
    <property type="expression patterns" value="Expressed in visceral pleura and 198 other cell types or tissues"/>
</dbReference>
<dbReference type="GO" id="GO:0005737">
    <property type="term" value="C:cytoplasm"/>
    <property type="evidence" value="ECO:0000318"/>
    <property type="project" value="GO_Central"/>
</dbReference>
<dbReference type="GO" id="GO:0030659">
    <property type="term" value="C:cytoplasmic vesicle membrane"/>
    <property type="evidence" value="ECO:0007669"/>
    <property type="project" value="Ensembl"/>
</dbReference>
<dbReference type="GO" id="GO:0005829">
    <property type="term" value="C:cytosol"/>
    <property type="evidence" value="ECO:0000304"/>
    <property type="project" value="Reactome"/>
</dbReference>
<dbReference type="GO" id="GO:0031905">
    <property type="term" value="C:early endosome lumen"/>
    <property type="evidence" value="ECO:0000304"/>
    <property type="project" value="Reactome"/>
</dbReference>
<dbReference type="GO" id="GO:0005615">
    <property type="term" value="C:extracellular space"/>
    <property type="evidence" value="ECO:0000318"/>
    <property type="project" value="GO_Central"/>
</dbReference>
<dbReference type="GO" id="GO:0005765">
    <property type="term" value="C:lysosomal membrane"/>
    <property type="evidence" value="ECO:0007005"/>
    <property type="project" value="UniProtKB"/>
</dbReference>
<dbReference type="GO" id="GO:0016020">
    <property type="term" value="C:membrane"/>
    <property type="evidence" value="ECO:0007005"/>
    <property type="project" value="UniProtKB"/>
</dbReference>
<dbReference type="GO" id="GO:0048471">
    <property type="term" value="C:perinuclear region of cytoplasm"/>
    <property type="evidence" value="ECO:0007669"/>
    <property type="project" value="Ensembl"/>
</dbReference>
<dbReference type="GO" id="GO:0005886">
    <property type="term" value="C:plasma membrane"/>
    <property type="evidence" value="ECO:0000314"/>
    <property type="project" value="HGNC-UCL"/>
</dbReference>
<dbReference type="GO" id="GO:0004177">
    <property type="term" value="F:aminopeptidase activity"/>
    <property type="evidence" value="ECO:0000269"/>
    <property type="project" value="Reactome"/>
</dbReference>
<dbReference type="GO" id="GO:0070006">
    <property type="term" value="F:metalloaminopeptidase activity"/>
    <property type="evidence" value="ECO:0000318"/>
    <property type="project" value="GO_Central"/>
</dbReference>
<dbReference type="GO" id="GO:0008237">
    <property type="term" value="F:metallopeptidase activity"/>
    <property type="evidence" value="ECO:0000304"/>
    <property type="project" value="ProtInc"/>
</dbReference>
<dbReference type="GO" id="GO:0042277">
    <property type="term" value="F:peptide binding"/>
    <property type="evidence" value="ECO:0000318"/>
    <property type="project" value="GO_Central"/>
</dbReference>
<dbReference type="GO" id="GO:0008270">
    <property type="term" value="F:zinc ion binding"/>
    <property type="evidence" value="ECO:0000318"/>
    <property type="project" value="GO_Central"/>
</dbReference>
<dbReference type="GO" id="GO:0002480">
    <property type="term" value="P:antigen processing and presentation of exogenous peptide antigen via MHC class I, TAP-independent"/>
    <property type="evidence" value="ECO:0000304"/>
    <property type="project" value="Reactome"/>
</dbReference>
<dbReference type="GO" id="GO:0007267">
    <property type="term" value="P:cell-cell signaling"/>
    <property type="evidence" value="ECO:0000304"/>
    <property type="project" value="ProtInc"/>
</dbReference>
<dbReference type="GO" id="GO:0007565">
    <property type="term" value="P:female pregnancy"/>
    <property type="evidence" value="ECO:0000304"/>
    <property type="project" value="ProtInc"/>
</dbReference>
<dbReference type="GO" id="GO:0120163">
    <property type="term" value="P:negative regulation of cold-induced thermogenesis"/>
    <property type="evidence" value="ECO:0000250"/>
    <property type="project" value="YuBioLab"/>
</dbReference>
<dbReference type="GO" id="GO:0043171">
    <property type="term" value="P:peptide catabolic process"/>
    <property type="evidence" value="ECO:0000318"/>
    <property type="project" value="GO_Central"/>
</dbReference>
<dbReference type="GO" id="GO:0030163">
    <property type="term" value="P:protein catabolic process"/>
    <property type="evidence" value="ECO:0007669"/>
    <property type="project" value="Ensembl"/>
</dbReference>
<dbReference type="GO" id="GO:0000209">
    <property type="term" value="P:protein polyubiquitination"/>
    <property type="evidence" value="ECO:0000304"/>
    <property type="project" value="Reactome"/>
</dbReference>
<dbReference type="GO" id="GO:0006508">
    <property type="term" value="P:proteolysis"/>
    <property type="evidence" value="ECO:0000318"/>
    <property type="project" value="GO_Central"/>
</dbReference>
<dbReference type="GO" id="GO:0008217">
    <property type="term" value="P:regulation of blood pressure"/>
    <property type="evidence" value="ECO:0000318"/>
    <property type="project" value="GO_Central"/>
</dbReference>
<dbReference type="CDD" id="cd09601">
    <property type="entry name" value="M1_APN-Q_like"/>
    <property type="match status" value="1"/>
</dbReference>
<dbReference type="FunFam" id="1.10.390.10:FF:000010">
    <property type="entry name" value="Leucyl-cystinyl aminopeptidase"/>
    <property type="match status" value="1"/>
</dbReference>
<dbReference type="FunFam" id="1.25.50.20:FF:000003">
    <property type="entry name" value="Leucyl-cystinyl aminopeptidase"/>
    <property type="match status" value="1"/>
</dbReference>
<dbReference type="FunFam" id="2.60.40.1730:FF:000001">
    <property type="entry name" value="Leucyl-cystinyl aminopeptidase"/>
    <property type="match status" value="1"/>
</dbReference>
<dbReference type="FunFam" id="2.60.40.1910:FF:000001">
    <property type="entry name" value="Leucyl-cystinyl aminopeptidase"/>
    <property type="match status" value="1"/>
</dbReference>
<dbReference type="Gene3D" id="1.25.50.20">
    <property type="match status" value="1"/>
</dbReference>
<dbReference type="Gene3D" id="2.60.40.1910">
    <property type="match status" value="1"/>
</dbReference>
<dbReference type="Gene3D" id="1.10.390.10">
    <property type="entry name" value="Neutral Protease Domain 2"/>
    <property type="match status" value="1"/>
</dbReference>
<dbReference type="Gene3D" id="2.60.40.1730">
    <property type="entry name" value="tricorn interacting facor f3 domain"/>
    <property type="match status" value="1"/>
</dbReference>
<dbReference type="InterPro" id="IPR045357">
    <property type="entry name" value="Aminopeptidase_N-like_N"/>
</dbReference>
<dbReference type="InterPro" id="IPR042097">
    <property type="entry name" value="Aminopeptidase_N-like_N_sf"/>
</dbReference>
<dbReference type="InterPro" id="IPR024571">
    <property type="entry name" value="ERAP1-like_C_dom"/>
</dbReference>
<dbReference type="InterPro" id="IPR034016">
    <property type="entry name" value="M1_APN-typ"/>
</dbReference>
<dbReference type="InterPro" id="IPR001930">
    <property type="entry name" value="Peptidase_M1"/>
</dbReference>
<dbReference type="InterPro" id="IPR050344">
    <property type="entry name" value="Peptidase_M1_aminopeptidases"/>
</dbReference>
<dbReference type="InterPro" id="IPR014782">
    <property type="entry name" value="Peptidase_M1_dom"/>
</dbReference>
<dbReference type="InterPro" id="IPR027268">
    <property type="entry name" value="Peptidase_M4/M1_CTD_sf"/>
</dbReference>
<dbReference type="PANTHER" id="PTHR11533:SF42">
    <property type="entry name" value="LEUCYL-CYSTINYL AMINOPEPTIDASE"/>
    <property type="match status" value="1"/>
</dbReference>
<dbReference type="PANTHER" id="PTHR11533">
    <property type="entry name" value="PROTEASE M1 ZINC METALLOPROTEASE"/>
    <property type="match status" value="1"/>
</dbReference>
<dbReference type="Pfam" id="PF11838">
    <property type="entry name" value="ERAP1_C"/>
    <property type="match status" value="1"/>
</dbReference>
<dbReference type="Pfam" id="PF01433">
    <property type="entry name" value="Peptidase_M1"/>
    <property type="match status" value="1"/>
</dbReference>
<dbReference type="Pfam" id="PF17900">
    <property type="entry name" value="Peptidase_M1_N"/>
    <property type="match status" value="1"/>
</dbReference>
<dbReference type="PRINTS" id="PR00756">
    <property type="entry name" value="ALADIPTASE"/>
</dbReference>
<dbReference type="SUPFAM" id="SSF63737">
    <property type="entry name" value="Leukotriene A4 hydrolase N-terminal domain"/>
    <property type="match status" value="1"/>
</dbReference>
<dbReference type="SUPFAM" id="SSF55486">
    <property type="entry name" value="Metalloproteases ('zincins'), catalytic domain"/>
    <property type="match status" value="1"/>
</dbReference>
<dbReference type="PROSITE" id="PS00142">
    <property type="entry name" value="ZINC_PROTEASE"/>
    <property type="match status" value="1"/>
</dbReference>
<reference key="1">
    <citation type="journal article" date="1996" name="J. Biol. Chem.">
        <title>Human placental leucine aminopeptidase/oxytocinase. A new member of type II membrane-spanning zinc metallopeptidase family.</title>
        <authorList>
            <person name="Rogi T."/>
            <person name="Tsujimoto M."/>
            <person name="Nakazato H."/>
            <person name="Mizutani S."/>
            <person name="Tomoda Y."/>
        </authorList>
    </citation>
    <scope>NUCLEOTIDE SEQUENCE [MRNA]</scope>
    <scope>PROTEIN SEQUENCE OF 160-168; 319-332; 615-624; 635-647; 798-814 AND 870-880</scope>
    <scope>TISSUE SPECIFICITY</scope>
    <source>
        <tissue>Placenta</tissue>
    </source>
</reference>
<reference key="2">
    <citation type="journal article" date="1997" name="Biochim. Biophys. Acta">
        <title>The complete amino acid sequence of human placental oxytocinase.</title>
        <authorList>
            <person name="Laustsen P.G."/>
            <person name="Rasmussen T.E."/>
            <person name="Petersen K."/>
            <person name="Pedraza-Diaz S."/>
            <person name="Moestrup S.K."/>
            <person name="Gliemann J."/>
            <person name="Sottrup-Jensen L."/>
            <person name="Kristensen T."/>
        </authorList>
    </citation>
    <scope>NUCLEOTIDE SEQUENCE [MRNA] (ISOFORMS 1 AND 2)</scope>
    <scope>TISSUE SPECIFICITY</scope>
    <source>
        <tissue>Placenta</tissue>
    </source>
</reference>
<reference key="3">
    <citation type="journal article" date="2000" name="Eur. J. Biochem.">
        <title>Structure of the human oxytocinase/insulin-regulated aminopeptidase gene and localization to chromosome 5q21.</title>
        <authorList>
            <person name="Rasmussen T.E."/>
            <person name="Pedraza-Diaz S."/>
            <person name="Hardre R."/>
            <person name="Laustsen P.G."/>
            <person name="Carrion A.G."/>
            <person name="Kristensen T."/>
        </authorList>
    </citation>
    <scope>NUCLEOTIDE SEQUENCE [GENOMIC DNA] (ISOFORMS 1 AND 3)</scope>
</reference>
<reference key="4">
    <citation type="journal article" date="2001" name="Eur. J. Biochem.">
        <title>Expression of placental leucine aminopeptidase/oxytocinase in neuronal cells and its action on neuronal peptides.</title>
        <authorList>
            <person name="Matsumoto H."/>
            <person name="Nagasaka T."/>
            <person name="Hattori A."/>
            <person name="Rogi T."/>
            <person name="Tsuruoka N."/>
            <person name="Mizutani S."/>
            <person name="Tsujimoto M."/>
        </authorList>
    </citation>
    <scope>NUCLEOTIDE SEQUENCE [MRNA] (ISOFORMS 1; 2 AND 3)</scope>
    <scope>FUNCTION</scope>
    <scope>CATALYTIC ACTIVITY</scope>
    <scope>SUBCELLULAR LOCATION</scope>
    <scope>TISSUE SPECIFICITY</scope>
</reference>
<reference key="5">
    <citation type="submission" date="2005-03" db="EMBL/GenBank/DDBJ databases">
        <authorList>
            <person name="Totoki Y."/>
            <person name="Toyoda A."/>
            <person name="Takeda T."/>
            <person name="Sakaki Y."/>
            <person name="Tanaka A."/>
            <person name="Yokoyama S."/>
            <person name="Ohara O."/>
            <person name="Nagase T."/>
            <person name="Kikuno R.F."/>
        </authorList>
    </citation>
    <scope>NUCLEOTIDE SEQUENCE [LARGE SCALE MRNA] OF 206-1025</scope>
    <source>
        <tissue>Brain</tissue>
    </source>
</reference>
<reference key="6">
    <citation type="journal article" date="1994" name="Immunogenetics">
        <title>Pool sequencing of natural HLA-DR, DQ, and DP ligands reveals detailed peptide motifs, constraints of processing, and general rules.</title>
        <authorList>
            <person name="Falk K."/>
            <person name="Roetzschke O."/>
            <person name="Stevanovic S."/>
            <person name="Jung G."/>
            <person name="Rammensee H.G."/>
        </authorList>
    </citation>
    <scope>PROTEIN SEQUENCE OF 285-301 AND 710-724</scope>
</reference>
<reference key="7">
    <citation type="journal article" date="1992" name="Arch. Biochem. Biophys.">
        <title>Identification of human placental leucine aminopeptidase as oxytocinase.</title>
        <authorList>
            <person name="Tsujimoto M."/>
            <person name="Mizutani S."/>
            <person name="Adachi H."/>
            <person name="Kimura M."/>
            <person name="Nakazato H."/>
            <person name="Tomoda Y."/>
        </authorList>
    </citation>
    <scope>FUNCTION</scope>
    <scope>CATALYTIC ACTIVITY</scope>
</reference>
<reference key="8">
    <citation type="journal article" date="2001" name="J. Biol. Chem.">
        <title>Evidence that the angiotensin IV (AT(4)) receptor is the enzyme insulin-regulated aminopeptidase.</title>
        <authorList>
            <person name="Albiston A.L."/>
            <person name="McDowall S.G."/>
            <person name="Matsacos D."/>
            <person name="Sim P."/>
            <person name="Clune E."/>
            <person name="Mustafa T."/>
            <person name="Lee J."/>
            <person name="Mendelsohn F.A."/>
            <person name="Simpson R.J."/>
            <person name="Connolly L.M."/>
            <person name="Chai S.Y."/>
        </authorList>
    </citation>
    <scope>FUNCTION</scope>
</reference>
<reference key="9">
    <citation type="journal article" date="2008" name="Proc. Natl. Acad. Sci. U.S.A.">
        <title>A quantitative atlas of mitotic phosphorylation.</title>
        <authorList>
            <person name="Dephoure N."/>
            <person name="Zhou C."/>
            <person name="Villen J."/>
            <person name="Beausoleil S.A."/>
            <person name="Bakalarski C.E."/>
            <person name="Elledge S.J."/>
            <person name="Gygi S.P."/>
        </authorList>
    </citation>
    <scope>IDENTIFICATION BY MASS SPECTROMETRY [LARGE SCALE ANALYSIS]</scope>
    <source>
        <tissue>Cervix carcinoma</tissue>
    </source>
</reference>
<reference key="10">
    <citation type="journal article" date="2009" name="Nat. Biotechnol.">
        <title>Mass-spectrometric identification and relative quantification of N-linked cell surface glycoproteins.</title>
        <authorList>
            <person name="Wollscheid B."/>
            <person name="Bausch-Fluck D."/>
            <person name="Henderson C."/>
            <person name="O'Brien R."/>
            <person name="Bibel M."/>
            <person name="Schiess R."/>
            <person name="Aebersold R."/>
            <person name="Watts J.D."/>
        </authorList>
    </citation>
    <scope>GLYCOSYLATION [LARGE SCALE ANALYSIS] AT ASN-184; ASN-448; ASN-682 AND ASN-850</scope>
    <source>
        <tissue>Leukemic T-cell</tissue>
    </source>
</reference>
<reference key="11">
    <citation type="journal article" date="2011" name="BMC Syst. Biol.">
        <title>Initial characterization of the human central proteome.</title>
        <authorList>
            <person name="Burkard T.R."/>
            <person name="Planyavsky M."/>
            <person name="Kaupe I."/>
            <person name="Breitwieser F.P."/>
            <person name="Buerckstuemmer T."/>
            <person name="Bennett K.L."/>
            <person name="Superti-Furga G."/>
            <person name="Colinge J."/>
        </authorList>
    </citation>
    <scope>IDENTIFICATION BY MASS SPECTROMETRY [LARGE SCALE ANALYSIS]</scope>
</reference>
<reference key="12">
    <citation type="journal article" date="2012" name="Proc. Natl. Acad. Sci. U.S.A.">
        <title>N-terminal acetylome analyses and functional insights of the N-terminal acetyltransferase NatB.</title>
        <authorList>
            <person name="Van Damme P."/>
            <person name="Lasa M."/>
            <person name="Polevoda B."/>
            <person name="Gazquez C."/>
            <person name="Elosegui-Artola A."/>
            <person name="Kim D.S."/>
            <person name="De Juan-Pardo E."/>
            <person name="Demeyer K."/>
            <person name="Hole K."/>
            <person name="Larrea E."/>
            <person name="Timmerman E."/>
            <person name="Prieto J."/>
            <person name="Arnesen T."/>
            <person name="Sherman F."/>
            <person name="Gevaert K."/>
            <person name="Aldabe R."/>
        </authorList>
    </citation>
    <scope>ACETYLATION [LARGE SCALE ANALYSIS] AT MET-1</scope>
    <scope>IDENTIFICATION BY MASS SPECTROMETRY [LARGE SCALE ANALYSIS]</scope>
</reference>
<reference key="13">
    <citation type="journal article" date="2013" name="J. Proteome Res.">
        <title>Toward a comprehensive characterization of a human cancer cell phosphoproteome.</title>
        <authorList>
            <person name="Zhou H."/>
            <person name="Di Palma S."/>
            <person name="Preisinger C."/>
            <person name="Peng M."/>
            <person name="Polat A.N."/>
            <person name="Heck A.J."/>
            <person name="Mohammed S."/>
        </authorList>
    </citation>
    <scope>PHOSPHORYLATION [LARGE SCALE ANALYSIS] AT SER-80 AND SER-91</scope>
    <scope>IDENTIFICATION BY MASS SPECTROMETRY [LARGE SCALE ANALYSIS]</scope>
    <source>
        <tissue>Cervix carcinoma</tissue>
        <tissue>Erythroleukemia</tissue>
    </source>
</reference>
<reference key="14">
    <citation type="journal article" date="2014" name="J. Proteomics">
        <title>An enzyme assisted RP-RPLC approach for in-depth analysis of human liver phosphoproteome.</title>
        <authorList>
            <person name="Bian Y."/>
            <person name="Song C."/>
            <person name="Cheng K."/>
            <person name="Dong M."/>
            <person name="Wang F."/>
            <person name="Huang J."/>
            <person name="Sun D."/>
            <person name="Wang L."/>
            <person name="Ye M."/>
            <person name="Zou H."/>
        </authorList>
    </citation>
    <scope>PHOSPHORYLATION [LARGE SCALE ANALYSIS] AT SER-91</scope>
    <scope>IDENTIFICATION BY MASS SPECTROMETRY [LARGE SCALE ANALYSIS]</scope>
    <source>
        <tissue>Liver</tissue>
    </source>
</reference>
<reference key="15">
    <citation type="journal article" date="2015" name="Proteomics">
        <title>N-terminome analysis of the human mitochondrial proteome.</title>
        <authorList>
            <person name="Vaca Jacome A.S."/>
            <person name="Rabilloud T."/>
            <person name="Schaeffer-Reiss C."/>
            <person name="Rompais M."/>
            <person name="Ayoub D."/>
            <person name="Lane L."/>
            <person name="Bairoch A."/>
            <person name="Van Dorsselaer A."/>
            <person name="Carapito C."/>
        </authorList>
    </citation>
    <scope>IDENTIFICATION BY MASS SPECTROMETRY [LARGE SCALE ANALYSIS]</scope>
</reference>
<organism>
    <name type="scientific">Homo sapiens</name>
    <name type="common">Human</name>
    <dbReference type="NCBI Taxonomy" id="9606"/>
    <lineage>
        <taxon>Eukaryota</taxon>
        <taxon>Metazoa</taxon>
        <taxon>Chordata</taxon>
        <taxon>Craniata</taxon>
        <taxon>Vertebrata</taxon>
        <taxon>Euteleostomi</taxon>
        <taxon>Mammalia</taxon>
        <taxon>Eutheria</taxon>
        <taxon>Euarchontoglires</taxon>
        <taxon>Primates</taxon>
        <taxon>Haplorrhini</taxon>
        <taxon>Catarrhini</taxon>
        <taxon>Hominidae</taxon>
        <taxon>Homo</taxon>
    </lineage>
</organism>
<sequence>MEPFTNDRLQLPRNMIENSMFEEEPDVVDLAKEPCLHPLEPDEVEYEPRGSRLLVRGLGEHEMEEDEEDYESSAKLLGMSFMNRSSGLRNSATGYRQSPDGACSVPSARTMVVCAFVIVVAVSVIMVIYLLPRCTFTKEGCHKKNQSIGLIQPFATNGKLFPWAQIRLPTAVVPLRYELSLHPNLTSMTFRGSVTISVQALQVTWNIILHSTGHNISRVTFMSAVSSQEKQAEILEYAYHGQIAIVAPEALLAGHNYTLKIEYSANISSSYYGFYGFSYTDESNEKKYFAATQFEPLAARSAFPCFDEPAFKATFIIKIIRDEQYTALSNMPKKSSVVLDDGLVQDEFSESVKMSTYLVAFIVGEMKNLSQDVNGTLVSIYAVPEKIGQVHYALETTVKLLEFFQNYFEIQYPLKKLDLVAIPDFEAGAMENWGLLTFREETLLYDSNTSSMADRKLVTKIIAHELAHQWFGNLVTMKWWNDLWLNEGFATFMEYFSLEKIFKELSSYEDFLDARFKTMKKDSLNSSHPISSSVQSSEQIEEMFDSLSYFKGSSLLLMLKTYLSEDVFQHAVVLYLHNHSYASIQSDDLWDSFNEVTNQTLDVKRMMKTWTLQKGFPLVTVQKKGKELFIQQERFFLNMKPEIQPSDTSYLWHIPLSYVTEGRNYSKYQSVSLLDKKSGVINLTEEVLWVKVNINMNGYYIVHYADDDWEALIHQLKINPYVLSDKDRANLINNIFELAGLGKVPLKRAFDLINYLGNENHTAPITEALFQTDLIYNLLEKLGYMDLASRLVTRVFKLLQNQIQQQTWTDEGTPSMRELRSALLEFACTHNLGNCSTTAMKLFDDWMASNGTQSLPTDVMTTVFKVGAKTDKGWSFLLGKYISIGSEAEKNKILEALASSEDVRKLYWLMKSSLNGDNFRTQKLSFIIRTVGRHFPGHLLAWDFVKENWNKLVQKFPLGSYTIQNIVAGSTYLFSTKTHLSEVQAFFENQSEATFRLRCVQEALEVIQLNIQWMEKNLKSLTWWL</sequence>
<proteinExistence type="evidence at protein level"/>
<accession>Q9UIQ6</accession>
<accession>O00769</accession>
<accession>Q15145</accession>
<accession>Q59H76</accession>
<accession>Q9TNQ2</accession>
<accession>Q9TNQ3</accession>
<accession>Q9UIQ7</accession>